<gene>
    <name evidence="1" type="primary">hisD</name>
    <name type="ordered locus">NMA1770</name>
</gene>
<reference key="1">
    <citation type="journal article" date="2000" name="Nature">
        <title>Complete DNA sequence of a serogroup A strain of Neisseria meningitidis Z2491.</title>
        <authorList>
            <person name="Parkhill J."/>
            <person name="Achtman M."/>
            <person name="James K.D."/>
            <person name="Bentley S.D."/>
            <person name="Churcher C.M."/>
            <person name="Klee S.R."/>
            <person name="Morelli G."/>
            <person name="Basham D."/>
            <person name="Brown D."/>
            <person name="Chillingworth T."/>
            <person name="Davies R.M."/>
            <person name="Davis P."/>
            <person name="Devlin K."/>
            <person name="Feltwell T."/>
            <person name="Hamlin N."/>
            <person name="Holroyd S."/>
            <person name="Jagels K."/>
            <person name="Leather S."/>
            <person name="Moule S."/>
            <person name="Mungall K.L."/>
            <person name="Quail M.A."/>
            <person name="Rajandream M.A."/>
            <person name="Rutherford K.M."/>
            <person name="Simmonds M."/>
            <person name="Skelton J."/>
            <person name="Whitehead S."/>
            <person name="Spratt B.G."/>
            <person name="Barrell B.G."/>
        </authorList>
    </citation>
    <scope>NUCLEOTIDE SEQUENCE [LARGE SCALE GENOMIC DNA]</scope>
    <source>
        <strain>DSM 15465 / Z2491</strain>
    </source>
</reference>
<sequence length="429" mass="46338">MKKLNTQSPDFQAGLKALLAFETAQNPETERIVADICADVQKRGDAALIEYTNKFDQTNAKSIDDLILTQADLKAAFERIPNDVQTALQTAARRVESYHQRQKMESWSYTDEDGTLLGQQITPLDRVGIYVPGGKAAYPSSVIMNAMPAHVAGVKEIIMVVPTPKGERNDIVLAAAYVAGVTKVFTVGGAQAVAALAYGTETIPQVDKITGPGNAFVAAAKRRVFGVVGIDMVAGPSEILVIADGTTPADWVAMDLFSQAEHDEIAQAILIGTSQAYLDEVEAAMDRLIETMPRRDIIEASLGNRGAMILAKDLDEACEIANYISPEHLELSVENPQEWAKKIRHAGAIFMGRYTGESLGDYCAGPNHVLPTSRTARFSSPLGTYDFQKRSSLIQVSEQGAQKLGETASVLAHGESLTAHARAAEFRMK</sequence>
<keyword id="KW-0028">Amino-acid biosynthesis</keyword>
<keyword id="KW-0368">Histidine biosynthesis</keyword>
<keyword id="KW-0479">Metal-binding</keyword>
<keyword id="KW-0520">NAD</keyword>
<keyword id="KW-0560">Oxidoreductase</keyword>
<keyword id="KW-0862">Zinc</keyword>
<dbReference type="EC" id="1.1.1.23" evidence="1"/>
<dbReference type="EMBL" id="AL157959">
    <property type="protein sequence ID" value="CAM08897.1"/>
    <property type="molecule type" value="Genomic_DNA"/>
</dbReference>
<dbReference type="PIR" id="B81802">
    <property type="entry name" value="B81802"/>
</dbReference>
<dbReference type="RefSeq" id="WP_002216785.1">
    <property type="nucleotide sequence ID" value="NC_003116.1"/>
</dbReference>
<dbReference type="SMR" id="Q9JTH9"/>
<dbReference type="EnsemblBacteria" id="CAM08897">
    <property type="protein sequence ID" value="CAM08897"/>
    <property type="gene ID" value="NMA1770"/>
</dbReference>
<dbReference type="KEGG" id="nma:NMA1770"/>
<dbReference type="HOGENOM" id="CLU_006732_3_3_4"/>
<dbReference type="UniPathway" id="UPA00031">
    <property type="reaction ID" value="UER00014"/>
</dbReference>
<dbReference type="Proteomes" id="UP000000626">
    <property type="component" value="Chromosome"/>
</dbReference>
<dbReference type="GO" id="GO:0005829">
    <property type="term" value="C:cytosol"/>
    <property type="evidence" value="ECO:0007669"/>
    <property type="project" value="TreeGrafter"/>
</dbReference>
<dbReference type="GO" id="GO:0004399">
    <property type="term" value="F:histidinol dehydrogenase activity"/>
    <property type="evidence" value="ECO:0007669"/>
    <property type="project" value="UniProtKB-UniRule"/>
</dbReference>
<dbReference type="GO" id="GO:0051287">
    <property type="term" value="F:NAD binding"/>
    <property type="evidence" value="ECO:0007669"/>
    <property type="project" value="InterPro"/>
</dbReference>
<dbReference type="GO" id="GO:0008270">
    <property type="term" value="F:zinc ion binding"/>
    <property type="evidence" value="ECO:0007669"/>
    <property type="project" value="UniProtKB-UniRule"/>
</dbReference>
<dbReference type="GO" id="GO:0000105">
    <property type="term" value="P:L-histidine biosynthetic process"/>
    <property type="evidence" value="ECO:0007669"/>
    <property type="project" value="UniProtKB-UniRule"/>
</dbReference>
<dbReference type="CDD" id="cd06572">
    <property type="entry name" value="Histidinol_dh"/>
    <property type="match status" value="1"/>
</dbReference>
<dbReference type="FunFam" id="3.40.50.1980:FF:000004">
    <property type="entry name" value="Histidinol dehydrogenase"/>
    <property type="match status" value="1"/>
</dbReference>
<dbReference type="FunFam" id="3.40.50.1980:FF:000010">
    <property type="entry name" value="Histidinol dehydrogenase"/>
    <property type="match status" value="1"/>
</dbReference>
<dbReference type="FunFam" id="1.20.5.1300:FF:000002">
    <property type="entry name" value="Histidinol dehydrogenase, chloroplastic"/>
    <property type="match status" value="1"/>
</dbReference>
<dbReference type="Gene3D" id="1.20.5.1300">
    <property type="match status" value="1"/>
</dbReference>
<dbReference type="Gene3D" id="3.40.50.1980">
    <property type="entry name" value="Nitrogenase molybdenum iron protein domain"/>
    <property type="match status" value="2"/>
</dbReference>
<dbReference type="HAMAP" id="MF_01024">
    <property type="entry name" value="HisD"/>
    <property type="match status" value="1"/>
</dbReference>
<dbReference type="InterPro" id="IPR016161">
    <property type="entry name" value="Ald_DH/histidinol_DH"/>
</dbReference>
<dbReference type="InterPro" id="IPR001692">
    <property type="entry name" value="Histidinol_DH_CS"/>
</dbReference>
<dbReference type="InterPro" id="IPR022695">
    <property type="entry name" value="Histidinol_DH_monofunct"/>
</dbReference>
<dbReference type="InterPro" id="IPR012131">
    <property type="entry name" value="Hstdl_DH"/>
</dbReference>
<dbReference type="NCBIfam" id="TIGR00069">
    <property type="entry name" value="hisD"/>
    <property type="match status" value="1"/>
</dbReference>
<dbReference type="PANTHER" id="PTHR21256:SF2">
    <property type="entry name" value="HISTIDINE BIOSYNTHESIS TRIFUNCTIONAL PROTEIN"/>
    <property type="match status" value="1"/>
</dbReference>
<dbReference type="PANTHER" id="PTHR21256">
    <property type="entry name" value="HISTIDINOL DEHYDROGENASE HDH"/>
    <property type="match status" value="1"/>
</dbReference>
<dbReference type="Pfam" id="PF00815">
    <property type="entry name" value="Histidinol_dh"/>
    <property type="match status" value="1"/>
</dbReference>
<dbReference type="PIRSF" id="PIRSF000099">
    <property type="entry name" value="Histidinol_dh"/>
    <property type="match status" value="1"/>
</dbReference>
<dbReference type="PRINTS" id="PR00083">
    <property type="entry name" value="HOLDHDRGNASE"/>
</dbReference>
<dbReference type="SUPFAM" id="SSF53720">
    <property type="entry name" value="ALDH-like"/>
    <property type="match status" value="1"/>
</dbReference>
<dbReference type="PROSITE" id="PS00611">
    <property type="entry name" value="HISOL_DEHYDROGENASE"/>
    <property type="match status" value="1"/>
</dbReference>
<comment type="function">
    <text evidence="1">Catalyzes the sequential NAD-dependent oxidations of L-histidinol to L-histidinaldehyde and then to L-histidine.</text>
</comment>
<comment type="catalytic activity">
    <reaction evidence="1">
        <text>L-histidinol + 2 NAD(+) + H2O = L-histidine + 2 NADH + 3 H(+)</text>
        <dbReference type="Rhea" id="RHEA:20641"/>
        <dbReference type="ChEBI" id="CHEBI:15377"/>
        <dbReference type="ChEBI" id="CHEBI:15378"/>
        <dbReference type="ChEBI" id="CHEBI:57540"/>
        <dbReference type="ChEBI" id="CHEBI:57595"/>
        <dbReference type="ChEBI" id="CHEBI:57699"/>
        <dbReference type="ChEBI" id="CHEBI:57945"/>
        <dbReference type="EC" id="1.1.1.23"/>
    </reaction>
</comment>
<comment type="cofactor">
    <cofactor evidence="1">
        <name>Zn(2+)</name>
        <dbReference type="ChEBI" id="CHEBI:29105"/>
    </cofactor>
    <text evidence="1">Binds 1 zinc ion per subunit.</text>
</comment>
<comment type="pathway">
    <text evidence="1">Amino-acid biosynthesis; L-histidine biosynthesis; L-histidine from 5-phospho-alpha-D-ribose 1-diphosphate: step 9/9.</text>
</comment>
<comment type="similarity">
    <text evidence="1">Belongs to the histidinol dehydrogenase family.</text>
</comment>
<evidence type="ECO:0000255" key="1">
    <source>
        <dbReference type="HAMAP-Rule" id="MF_01024"/>
    </source>
</evidence>
<feature type="chain" id="PRO_0000135801" description="Histidinol dehydrogenase">
    <location>
        <begin position="1"/>
        <end position="429"/>
    </location>
</feature>
<feature type="active site" description="Proton acceptor" evidence="1">
    <location>
        <position position="327"/>
    </location>
</feature>
<feature type="active site" description="Proton acceptor" evidence="1">
    <location>
        <position position="328"/>
    </location>
</feature>
<feature type="binding site" evidence="1">
    <location>
        <position position="130"/>
    </location>
    <ligand>
        <name>NAD(+)</name>
        <dbReference type="ChEBI" id="CHEBI:57540"/>
    </ligand>
</feature>
<feature type="binding site" evidence="1">
    <location>
        <position position="191"/>
    </location>
    <ligand>
        <name>NAD(+)</name>
        <dbReference type="ChEBI" id="CHEBI:57540"/>
    </ligand>
</feature>
<feature type="binding site" evidence="1">
    <location>
        <position position="214"/>
    </location>
    <ligand>
        <name>NAD(+)</name>
        <dbReference type="ChEBI" id="CHEBI:57540"/>
    </ligand>
</feature>
<feature type="binding site" evidence="1">
    <location>
        <position position="237"/>
    </location>
    <ligand>
        <name>substrate</name>
    </ligand>
</feature>
<feature type="binding site" evidence="1">
    <location>
        <position position="259"/>
    </location>
    <ligand>
        <name>substrate</name>
    </ligand>
</feature>
<feature type="binding site" evidence="1">
    <location>
        <position position="259"/>
    </location>
    <ligand>
        <name>Zn(2+)</name>
        <dbReference type="ChEBI" id="CHEBI:29105"/>
    </ligand>
</feature>
<feature type="binding site" evidence="1">
    <location>
        <position position="262"/>
    </location>
    <ligand>
        <name>substrate</name>
    </ligand>
</feature>
<feature type="binding site" evidence="1">
    <location>
        <position position="262"/>
    </location>
    <ligand>
        <name>Zn(2+)</name>
        <dbReference type="ChEBI" id="CHEBI:29105"/>
    </ligand>
</feature>
<feature type="binding site" evidence="1">
    <location>
        <position position="328"/>
    </location>
    <ligand>
        <name>substrate</name>
    </ligand>
</feature>
<feature type="binding site" evidence="1">
    <location>
        <position position="361"/>
    </location>
    <ligand>
        <name>substrate</name>
    </ligand>
</feature>
<feature type="binding site" evidence="1">
    <location>
        <position position="361"/>
    </location>
    <ligand>
        <name>Zn(2+)</name>
        <dbReference type="ChEBI" id="CHEBI:29105"/>
    </ligand>
</feature>
<feature type="binding site" evidence="1">
    <location>
        <position position="415"/>
    </location>
    <ligand>
        <name>substrate</name>
    </ligand>
</feature>
<feature type="binding site" evidence="1">
    <location>
        <position position="420"/>
    </location>
    <ligand>
        <name>substrate</name>
    </ligand>
</feature>
<feature type="binding site" evidence="1">
    <location>
        <position position="420"/>
    </location>
    <ligand>
        <name>Zn(2+)</name>
        <dbReference type="ChEBI" id="CHEBI:29105"/>
    </ligand>
</feature>
<organism>
    <name type="scientific">Neisseria meningitidis serogroup A / serotype 4A (strain DSM 15465 / Z2491)</name>
    <dbReference type="NCBI Taxonomy" id="122587"/>
    <lineage>
        <taxon>Bacteria</taxon>
        <taxon>Pseudomonadati</taxon>
        <taxon>Pseudomonadota</taxon>
        <taxon>Betaproteobacteria</taxon>
        <taxon>Neisseriales</taxon>
        <taxon>Neisseriaceae</taxon>
        <taxon>Neisseria</taxon>
    </lineage>
</organism>
<accession>Q9JTH9</accession>
<accession>A1ISY5</accession>
<protein>
    <recommendedName>
        <fullName evidence="1">Histidinol dehydrogenase</fullName>
        <shortName evidence="1">HDH</shortName>
        <ecNumber evidence="1">1.1.1.23</ecNumber>
    </recommendedName>
</protein>
<proteinExistence type="inferred from homology"/>
<name>HISX_NEIMA</name>